<proteinExistence type="inferred from homology"/>
<accession>Q8PH09</accession>
<keyword id="KW-0028">Amino-acid biosynthesis</keyword>
<keyword id="KW-0100">Branched-chain amino acid biosynthesis</keyword>
<keyword id="KW-0460">Magnesium</keyword>
<keyword id="KW-0479">Metal-binding</keyword>
<keyword id="KW-0521">NADP</keyword>
<keyword id="KW-0560">Oxidoreductase</keyword>
<sequence length="333" mass="35988">MSNHTQPKIAIIGYGSQGRAHALNLRDSGFDVTVGLRPGGPTEAKAQADGFTVVAPSEAVKSADLVAILTPDMVQKKLYEEVIAPNMKQGACLLFAHGLNVHFDMITPRADLDVVLVAPKGPGALVRREYEIGRGVPCIYAVYQDTSGKAEQFALTYAGGLGGARANIIKTTFKEETETDLFGEQAVLCGGASSLVQAGFEVLVEAGYQPEIAYYEVLHELKLIVDLFYEGGITRMLEFVSETAQYGDYVSGPRVIDAGTKARMKDVLTDIQNGTFTKNWVAEYDAGLPNYNKFKQADLEHPIEEVGKKLRAKMVWLNGQQQAAAAPANQQAA</sequence>
<organism>
    <name type="scientific">Xanthomonas axonopodis pv. citri (strain 306)</name>
    <dbReference type="NCBI Taxonomy" id="190486"/>
    <lineage>
        <taxon>Bacteria</taxon>
        <taxon>Pseudomonadati</taxon>
        <taxon>Pseudomonadota</taxon>
        <taxon>Gammaproteobacteria</taxon>
        <taxon>Lysobacterales</taxon>
        <taxon>Lysobacteraceae</taxon>
        <taxon>Xanthomonas</taxon>
    </lineage>
</organism>
<gene>
    <name evidence="1" type="primary">ilvC</name>
    <name type="ordered locus">XAC3451</name>
</gene>
<comment type="function">
    <text evidence="1">Involved in the biosynthesis of branched-chain amino acids (BCAA). Catalyzes an alkyl-migration followed by a ketol-acid reduction of (S)-2-acetolactate (S2AL) to yield (R)-2,3-dihydroxy-isovalerate. In the isomerase reaction, S2AL is rearranged via a Mg-dependent methyl migration to produce 3-hydroxy-3-methyl-2-ketobutyrate (HMKB). In the reductase reaction, this 2-ketoacid undergoes a metal-dependent reduction by NADPH to yield (R)-2,3-dihydroxy-isovalerate.</text>
</comment>
<comment type="catalytic activity">
    <reaction evidence="1">
        <text>(2R)-2,3-dihydroxy-3-methylbutanoate + NADP(+) = (2S)-2-acetolactate + NADPH + H(+)</text>
        <dbReference type="Rhea" id="RHEA:22068"/>
        <dbReference type="ChEBI" id="CHEBI:15378"/>
        <dbReference type="ChEBI" id="CHEBI:49072"/>
        <dbReference type="ChEBI" id="CHEBI:57783"/>
        <dbReference type="ChEBI" id="CHEBI:58349"/>
        <dbReference type="ChEBI" id="CHEBI:58476"/>
        <dbReference type="EC" id="1.1.1.86"/>
    </reaction>
</comment>
<comment type="catalytic activity">
    <reaction evidence="1">
        <text>(2R,3R)-2,3-dihydroxy-3-methylpentanoate + NADP(+) = (S)-2-ethyl-2-hydroxy-3-oxobutanoate + NADPH + H(+)</text>
        <dbReference type="Rhea" id="RHEA:13493"/>
        <dbReference type="ChEBI" id="CHEBI:15378"/>
        <dbReference type="ChEBI" id="CHEBI:49256"/>
        <dbReference type="ChEBI" id="CHEBI:49258"/>
        <dbReference type="ChEBI" id="CHEBI:57783"/>
        <dbReference type="ChEBI" id="CHEBI:58349"/>
        <dbReference type="EC" id="1.1.1.86"/>
    </reaction>
</comment>
<comment type="cofactor">
    <cofactor evidence="1">
        <name>Mg(2+)</name>
        <dbReference type="ChEBI" id="CHEBI:18420"/>
    </cofactor>
    <text evidence="1">Binds 2 magnesium ions per subunit.</text>
</comment>
<comment type="pathway">
    <text evidence="1">Amino-acid biosynthesis; L-isoleucine biosynthesis; L-isoleucine from 2-oxobutanoate: step 2/4.</text>
</comment>
<comment type="pathway">
    <text evidence="1">Amino-acid biosynthesis; L-valine biosynthesis; L-valine from pyruvate: step 2/4.</text>
</comment>
<comment type="similarity">
    <text evidence="1">Belongs to the ketol-acid reductoisomerase family.</text>
</comment>
<reference key="1">
    <citation type="journal article" date="2002" name="Nature">
        <title>Comparison of the genomes of two Xanthomonas pathogens with differing host specificities.</title>
        <authorList>
            <person name="da Silva A.C.R."/>
            <person name="Ferro J.A."/>
            <person name="Reinach F.C."/>
            <person name="Farah C.S."/>
            <person name="Furlan L.R."/>
            <person name="Quaggio R.B."/>
            <person name="Monteiro-Vitorello C.B."/>
            <person name="Van Sluys M.A."/>
            <person name="Almeida N.F. Jr."/>
            <person name="Alves L.M.C."/>
            <person name="do Amaral A.M."/>
            <person name="Bertolini M.C."/>
            <person name="Camargo L.E.A."/>
            <person name="Camarotte G."/>
            <person name="Cannavan F."/>
            <person name="Cardozo J."/>
            <person name="Chambergo F."/>
            <person name="Ciapina L.P."/>
            <person name="Cicarelli R.M.B."/>
            <person name="Coutinho L.L."/>
            <person name="Cursino-Santos J.R."/>
            <person name="El-Dorry H."/>
            <person name="Faria J.B."/>
            <person name="Ferreira A.J.S."/>
            <person name="Ferreira R.C.C."/>
            <person name="Ferro M.I.T."/>
            <person name="Formighieri E.F."/>
            <person name="Franco M.C."/>
            <person name="Greggio C.C."/>
            <person name="Gruber A."/>
            <person name="Katsuyama A.M."/>
            <person name="Kishi L.T."/>
            <person name="Leite R.P."/>
            <person name="Lemos E.G.M."/>
            <person name="Lemos M.V.F."/>
            <person name="Locali E.C."/>
            <person name="Machado M.A."/>
            <person name="Madeira A.M.B.N."/>
            <person name="Martinez-Rossi N.M."/>
            <person name="Martins E.C."/>
            <person name="Meidanis J."/>
            <person name="Menck C.F.M."/>
            <person name="Miyaki C.Y."/>
            <person name="Moon D.H."/>
            <person name="Moreira L.M."/>
            <person name="Novo M.T.M."/>
            <person name="Okura V.K."/>
            <person name="Oliveira M.C."/>
            <person name="Oliveira V.R."/>
            <person name="Pereira H.A."/>
            <person name="Rossi A."/>
            <person name="Sena J.A.D."/>
            <person name="Silva C."/>
            <person name="de Souza R.F."/>
            <person name="Spinola L.A.F."/>
            <person name="Takita M.A."/>
            <person name="Tamura R.E."/>
            <person name="Teixeira E.C."/>
            <person name="Tezza R.I.D."/>
            <person name="Trindade dos Santos M."/>
            <person name="Truffi D."/>
            <person name="Tsai S.M."/>
            <person name="White F.F."/>
            <person name="Setubal J.C."/>
            <person name="Kitajima J.P."/>
        </authorList>
    </citation>
    <scope>NUCLEOTIDE SEQUENCE [LARGE SCALE GENOMIC DNA]</scope>
    <source>
        <strain>306</strain>
    </source>
</reference>
<evidence type="ECO:0000255" key="1">
    <source>
        <dbReference type="HAMAP-Rule" id="MF_00435"/>
    </source>
</evidence>
<evidence type="ECO:0000255" key="2">
    <source>
        <dbReference type="PROSITE-ProRule" id="PRU01197"/>
    </source>
</evidence>
<evidence type="ECO:0000255" key="3">
    <source>
        <dbReference type="PROSITE-ProRule" id="PRU01198"/>
    </source>
</evidence>
<protein>
    <recommendedName>
        <fullName evidence="1">Ketol-acid reductoisomerase (NADP(+))</fullName>
        <shortName evidence="1">KARI</shortName>
        <ecNumber evidence="1">1.1.1.86</ecNumber>
    </recommendedName>
    <alternativeName>
        <fullName evidence="1">Acetohydroxy-acid isomeroreductase</fullName>
        <shortName evidence="1">AHIR</shortName>
    </alternativeName>
    <alternativeName>
        <fullName evidence="1">Alpha-keto-beta-hydroxylacyl reductoisomerase</fullName>
    </alternativeName>
    <alternativeName>
        <fullName evidence="1">Ketol-acid reductoisomerase type 1</fullName>
    </alternativeName>
    <alternativeName>
        <fullName evidence="1">Ketol-acid reductoisomerase type I</fullName>
    </alternativeName>
</protein>
<name>ILVC_XANAC</name>
<dbReference type="EC" id="1.1.1.86" evidence="1"/>
<dbReference type="EMBL" id="AE008923">
    <property type="protein sequence ID" value="AAM38294.1"/>
    <property type="molecule type" value="Genomic_DNA"/>
</dbReference>
<dbReference type="RefSeq" id="WP_003483339.1">
    <property type="nucleotide sequence ID" value="NC_003919.1"/>
</dbReference>
<dbReference type="SMR" id="Q8PH09"/>
<dbReference type="GeneID" id="66912494"/>
<dbReference type="KEGG" id="xac:XAC3451"/>
<dbReference type="eggNOG" id="COG0059">
    <property type="taxonomic scope" value="Bacteria"/>
</dbReference>
<dbReference type="HOGENOM" id="CLU_033821_0_1_6"/>
<dbReference type="UniPathway" id="UPA00047">
    <property type="reaction ID" value="UER00056"/>
</dbReference>
<dbReference type="UniPathway" id="UPA00049">
    <property type="reaction ID" value="UER00060"/>
</dbReference>
<dbReference type="Proteomes" id="UP000000576">
    <property type="component" value="Chromosome"/>
</dbReference>
<dbReference type="GO" id="GO:0005829">
    <property type="term" value="C:cytosol"/>
    <property type="evidence" value="ECO:0007669"/>
    <property type="project" value="TreeGrafter"/>
</dbReference>
<dbReference type="GO" id="GO:0004455">
    <property type="term" value="F:ketol-acid reductoisomerase activity"/>
    <property type="evidence" value="ECO:0007669"/>
    <property type="project" value="UniProtKB-UniRule"/>
</dbReference>
<dbReference type="GO" id="GO:0000287">
    <property type="term" value="F:magnesium ion binding"/>
    <property type="evidence" value="ECO:0007669"/>
    <property type="project" value="UniProtKB-UniRule"/>
</dbReference>
<dbReference type="GO" id="GO:0050661">
    <property type="term" value="F:NADP binding"/>
    <property type="evidence" value="ECO:0007669"/>
    <property type="project" value="InterPro"/>
</dbReference>
<dbReference type="GO" id="GO:0009097">
    <property type="term" value="P:isoleucine biosynthetic process"/>
    <property type="evidence" value="ECO:0007669"/>
    <property type="project" value="UniProtKB-UniRule"/>
</dbReference>
<dbReference type="GO" id="GO:0009099">
    <property type="term" value="P:L-valine biosynthetic process"/>
    <property type="evidence" value="ECO:0007669"/>
    <property type="project" value="UniProtKB-UniRule"/>
</dbReference>
<dbReference type="FunFam" id="3.40.50.720:FF:000023">
    <property type="entry name" value="Ketol-acid reductoisomerase (NADP(+))"/>
    <property type="match status" value="1"/>
</dbReference>
<dbReference type="Gene3D" id="6.10.240.10">
    <property type="match status" value="1"/>
</dbReference>
<dbReference type="Gene3D" id="3.40.50.720">
    <property type="entry name" value="NAD(P)-binding Rossmann-like Domain"/>
    <property type="match status" value="1"/>
</dbReference>
<dbReference type="HAMAP" id="MF_00435">
    <property type="entry name" value="IlvC"/>
    <property type="match status" value="1"/>
</dbReference>
<dbReference type="InterPro" id="IPR008927">
    <property type="entry name" value="6-PGluconate_DH-like_C_sf"/>
</dbReference>
<dbReference type="InterPro" id="IPR013023">
    <property type="entry name" value="KARI"/>
</dbReference>
<dbReference type="InterPro" id="IPR000506">
    <property type="entry name" value="KARI_C"/>
</dbReference>
<dbReference type="InterPro" id="IPR013116">
    <property type="entry name" value="KARI_N"/>
</dbReference>
<dbReference type="InterPro" id="IPR014359">
    <property type="entry name" value="KARI_prok"/>
</dbReference>
<dbReference type="InterPro" id="IPR036291">
    <property type="entry name" value="NAD(P)-bd_dom_sf"/>
</dbReference>
<dbReference type="NCBIfam" id="TIGR00465">
    <property type="entry name" value="ilvC"/>
    <property type="match status" value="1"/>
</dbReference>
<dbReference type="NCBIfam" id="NF004017">
    <property type="entry name" value="PRK05479.1"/>
    <property type="match status" value="1"/>
</dbReference>
<dbReference type="PANTHER" id="PTHR21371">
    <property type="entry name" value="KETOL-ACID REDUCTOISOMERASE, MITOCHONDRIAL"/>
    <property type="match status" value="1"/>
</dbReference>
<dbReference type="PANTHER" id="PTHR21371:SF1">
    <property type="entry name" value="KETOL-ACID REDUCTOISOMERASE, MITOCHONDRIAL"/>
    <property type="match status" value="1"/>
</dbReference>
<dbReference type="Pfam" id="PF01450">
    <property type="entry name" value="KARI_C"/>
    <property type="match status" value="1"/>
</dbReference>
<dbReference type="Pfam" id="PF07991">
    <property type="entry name" value="KARI_N"/>
    <property type="match status" value="1"/>
</dbReference>
<dbReference type="PIRSF" id="PIRSF000116">
    <property type="entry name" value="IlvC_gammaproteo"/>
    <property type="match status" value="1"/>
</dbReference>
<dbReference type="SUPFAM" id="SSF48179">
    <property type="entry name" value="6-phosphogluconate dehydrogenase C-terminal domain-like"/>
    <property type="match status" value="1"/>
</dbReference>
<dbReference type="SUPFAM" id="SSF51735">
    <property type="entry name" value="NAD(P)-binding Rossmann-fold domains"/>
    <property type="match status" value="1"/>
</dbReference>
<dbReference type="PROSITE" id="PS51851">
    <property type="entry name" value="KARI_C"/>
    <property type="match status" value="1"/>
</dbReference>
<dbReference type="PROSITE" id="PS51850">
    <property type="entry name" value="KARI_N"/>
    <property type="match status" value="1"/>
</dbReference>
<feature type="chain" id="PRO_0000151383" description="Ketol-acid reductoisomerase (NADP(+))">
    <location>
        <begin position="1"/>
        <end position="333"/>
    </location>
</feature>
<feature type="domain" description="KARI N-terminal Rossmann" evidence="2">
    <location>
        <begin position="1"/>
        <end position="171"/>
    </location>
</feature>
<feature type="domain" description="KARI C-terminal knotted" evidence="3">
    <location>
        <begin position="172"/>
        <end position="317"/>
    </location>
</feature>
<feature type="active site" evidence="1">
    <location>
        <position position="97"/>
    </location>
</feature>
<feature type="binding site" evidence="1">
    <location>
        <begin position="14"/>
        <end position="17"/>
    </location>
    <ligand>
        <name>NADP(+)</name>
        <dbReference type="ChEBI" id="CHEBI:58349"/>
    </ligand>
</feature>
<feature type="binding site" evidence="1">
    <location>
        <position position="37"/>
    </location>
    <ligand>
        <name>NADP(+)</name>
        <dbReference type="ChEBI" id="CHEBI:58349"/>
    </ligand>
</feature>
<feature type="binding site" evidence="1">
    <location>
        <position position="42"/>
    </location>
    <ligand>
        <name>NADP(+)</name>
        <dbReference type="ChEBI" id="CHEBI:58349"/>
    </ligand>
</feature>
<feature type="binding site" evidence="1">
    <location>
        <begin position="72"/>
        <end position="75"/>
    </location>
    <ligand>
        <name>NADP(+)</name>
        <dbReference type="ChEBI" id="CHEBI:58349"/>
    </ligand>
</feature>
<feature type="binding site" evidence="1">
    <location>
        <position position="123"/>
    </location>
    <ligand>
        <name>NADP(+)</name>
        <dbReference type="ChEBI" id="CHEBI:58349"/>
    </ligand>
</feature>
<feature type="binding site" evidence="1">
    <location>
        <position position="180"/>
    </location>
    <ligand>
        <name>Mg(2+)</name>
        <dbReference type="ChEBI" id="CHEBI:18420"/>
        <label>1</label>
    </ligand>
</feature>
<feature type="binding site" evidence="1">
    <location>
        <position position="180"/>
    </location>
    <ligand>
        <name>Mg(2+)</name>
        <dbReference type="ChEBI" id="CHEBI:18420"/>
        <label>2</label>
    </ligand>
</feature>
<feature type="binding site" evidence="1">
    <location>
        <position position="184"/>
    </location>
    <ligand>
        <name>Mg(2+)</name>
        <dbReference type="ChEBI" id="CHEBI:18420"/>
        <label>1</label>
    </ligand>
</feature>
<feature type="binding site" evidence="1">
    <location>
        <position position="216"/>
    </location>
    <ligand>
        <name>Mg(2+)</name>
        <dbReference type="ChEBI" id="CHEBI:18420"/>
        <label>2</label>
    </ligand>
</feature>
<feature type="binding site" evidence="1">
    <location>
        <position position="220"/>
    </location>
    <ligand>
        <name>Mg(2+)</name>
        <dbReference type="ChEBI" id="CHEBI:18420"/>
        <label>2</label>
    </ligand>
</feature>
<feature type="binding site" evidence="1">
    <location>
        <position position="241"/>
    </location>
    <ligand>
        <name>substrate</name>
    </ligand>
</feature>